<evidence type="ECO:0000250" key="1">
    <source>
        <dbReference type="UniProtKB" id="P26639"/>
    </source>
</evidence>
<evidence type="ECO:0000250" key="2">
    <source>
        <dbReference type="UniProtKB" id="Q9D0R2"/>
    </source>
</evidence>
<evidence type="ECO:0000255" key="3">
    <source>
        <dbReference type="PROSITE-ProRule" id="PRU01228"/>
    </source>
</evidence>
<evidence type="ECO:0000256" key="4">
    <source>
        <dbReference type="SAM" id="MobiDB-lite"/>
    </source>
</evidence>
<evidence type="ECO:0000305" key="5"/>
<keyword id="KW-0007">Acetylation</keyword>
<keyword id="KW-0030">Aminoacyl-tRNA synthetase</keyword>
<keyword id="KW-0067">ATP-binding</keyword>
<keyword id="KW-0963">Cytoplasm</keyword>
<keyword id="KW-0436">Ligase</keyword>
<keyword id="KW-0547">Nucleotide-binding</keyword>
<keyword id="KW-0597">Phosphoprotein</keyword>
<keyword id="KW-0648">Protein biosynthesis</keyword>
<keyword id="KW-1185">Reference proteome</keyword>
<keyword id="KW-0832">Ubl conjugation</keyword>
<dbReference type="EC" id="6.1.1.3" evidence="2"/>
<dbReference type="EMBL" id="BC103082">
    <property type="protein sequence ID" value="AAI03083.1"/>
    <property type="molecule type" value="mRNA"/>
</dbReference>
<dbReference type="RefSeq" id="NP_001029542.1">
    <property type="nucleotide sequence ID" value="NM_001034370.2"/>
</dbReference>
<dbReference type="SMR" id="Q3ZBV8"/>
<dbReference type="FunCoup" id="Q3ZBV8">
    <property type="interactions" value="3336"/>
</dbReference>
<dbReference type="STRING" id="9913.ENSBTAP00000018947"/>
<dbReference type="PaxDb" id="9913-ENSBTAP00000018947"/>
<dbReference type="PeptideAtlas" id="Q3ZBV8"/>
<dbReference type="Ensembl" id="ENSBTAT00000018947.5">
    <property type="protein sequence ID" value="ENSBTAP00000018947.3"/>
    <property type="gene ID" value="ENSBTAG00000014261.5"/>
</dbReference>
<dbReference type="GeneID" id="510075"/>
<dbReference type="KEGG" id="bta:510075"/>
<dbReference type="CTD" id="6897"/>
<dbReference type="VEuPathDB" id="HostDB:ENSBTAG00000014261"/>
<dbReference type="VGNC" id="VGNC:35605">
    <property type="gene designation" value="TARS1"/>
</dbReference>
<dbReference type="eggNOG" id="KOG1637">
    <property type="taxonomic scope" value="Eukaryota"/>
</dbReference>
<dbReference type="GeneTree" id="ENSGT00940000154969"/>
<dbReference type="HOGENOM" id="CLU_008554_0_1_1"/>
<dbReference type="InParanoid" id="Q3ZBV8"/>
<dbReference type="OMA" id="MMNQRLW"/>
<dbReference type="OrthoDB" id="5423599at2759"/>
<dbReference type="TreeFam" id="TF300858"/>
<dbReference type="Proteomes" id="UP000009136">
    <property type="component" value="Chromosome 20"/>
</dbReference>
<dbReference type="Bgee" id="ENSBTAG00000014261">
    <property type="expression patterns" value="Expressed in neutrophil and 107 other cell types or tissues"/>
</dbReference>
<dbReference type="GO" id="GO:0005737">
    <property type="term" value="C:cytoplasm"/>
    <property type="evidence" value="ECO:0000250"/>
    <property type="project" value="UniProtKB"/>
</dbReference>
<dbReference type="GO" id="GO:0005739">
    <property type="term" value="C:mitochondrion"/>
    <property type="evidence" value="ECO:0000318"/>
    <property type="project" value="GO_Central"/>
</dbReference>
<dbReference type="GO" id="GO:0005524">
    <property type="term" value="F:ATP binding"/>
    <property type="evidence" value="ECO:0007669"/>
    <property type="project" value="UniProtKB-KW"/>
</dbReference>
<dbReference type="GO" id="GO:0042802">
    <property type="term" value="F:identical protein binding"/>
    <property type="evidence" value="ECO:0007669"/>
    <property type="project" value="Ensembl"/>
</dbReference>
<dbReference type="GO" id="GO:0004829">
    <property type="term" value="F:threonine-tRNA ligase activity"/>
    <property type="evidence" value="ECO:0000250"/>
    <property type="project" value="UniProtKB"/>
</dbReference>
<dbReference type="GO" id="GO:0008270">
    <property type="term" value="F:zinc ion binding"/>
    <property type="evidence" value="ECO:0007669"/>
    <property type="project" value="Ensembl"/>
</dbReference>
<dbReference type="GO" id="GO:0006435">
    <property type="term" value="P:threonyl-tRNA aminoacylation"/>
    <property type="evidence" value="ECO:0000250"/>
    <property type="project" value="UniProtKB"/>
</dbReference>
<dbReference type="CDD" id="cd01667">
    <property type="entry name" value="TGS_ThrRS"/>
    <property type="match status" value="1"/>
</dbReference>
<dbReference type="CDD" id="cd00860">
    <property type="entry name" value="ThrRS_anticodon"/>
    <property type="match status" value="1"/>
</dbReference>
<dbReference type="CDD" id="cd00771">
    <property type="entry name" value="ThrRS_core"/>
    <property type="match status" value="1"/>
</dbReference>
<dbReference type="FunFam" id="3.30.930.10:FF:000009">
    <property type="entry name" value="Threonine--tRNA ligase 2, cytoplasmic"/>
    <property type="match status" value="1"/>
</dbReference>
<dbReference type="FunFam" id="3.40.50.800:FF:000003">
    <property type="entry name" value="Threonine--tRNA ligase 2, cytoplasmic"/>
    <property type="match status" value="1"/>
</dbReference>
<dbReference type="FunFam" id="3.10.20.30:FF:000006">
    <property type="entry name" value="Threonine--tRNA ligase, cytoplasmic"/>
    <property type="match status" value="1"/>
</dbReference>
<dbReference type="FunFam" id="3.30.980.10:FF:000003">
    <property type="entry name" value="Threonine--tRNA ligase, cytoplasmic"/>
    <property type="match status" value="1"/>
</dbReference>
<dbReference type="Gene3D" id="3.10.20.30">
    <property type="match status" value="1"/>
</dbReference>
<dbReference type="Gene3D" id="3.40.50.800">
    <property type="entry name" value="Anticodon-binding domain"/>
    <property type="match status" value="1"/>
</dbReference>
<dbReference type="Gene3D" id="3.30.930.10">
    <property type="entry name" value="Bira Bifunctional Protein, Domain 2"/>
    <property type="match status" value="1"/>
</dbReference>
<dbReference type="Gene3D" id="3.30.980.10">
    <property type="entry name" value="Threonyl-trna Synthetase, Chain A, domain 2"/>
    <property type="match status" value="1"/>
</dbReference>
<dbReference type="HAMAP" id="MF_00184">
    <property type="entry name" value="Thr_tRNA_synth"/>
    <property type="match status" value="1"/>
</dbReference>
<dbReference type="InterPro" id="IPR002314">
    <property type="entry name" value="aa-tRNA-synt_IIb"/>
</dbReference>
<dbReference type="InterPro" id="IPR006195">
    <property type="entry name" value="aa-tRNA-synth_II"/>
</dbReference>
<dbReference type="InterPro" id="IPR045864">
    <property type="entry name" value="aa-tRNA-synth_II/BPL/LPL"/>
</dbReference>
<dbReference type="InterPro" id="IPR004154">
    <property type="entry name" value="Anticodon-bd"/>
</dbReference>
<dbReference type="InterPro" id="IPR036621">
    <property type="entry name" value="Anticodon-bd_dom_sf"/>
</dbReference>
<dbReference type="InterPro" id="IPR012675">
    <property type="entry name" value="Beta-grasp_dom_sf"/>
</dbReference>
<dbReference type="InterPro" id="IPR004095">
    <property type="entry name" value="TGS"/>
</dbReference>
<dbReference type="InterPro" id="IPR012676">
    <property type="entry name" value="TGS-like"/>
</dbReference>
<dbReference type="InterPro" id="IPR002320">
    <property type="entry name" value="Thr-tRNA-ligase_IIa"/>
</dbReference>
<dbReference type="InterPro" id="IPR018163">
    <property type="entry name" value="Thr/Ala-tRNA-synth_IIc_edit"/>
</dbReference>
<dbReference type="InterPro" id="IPR047246">
    <property type="entry name" value="ThrRS_anticodon"/>
</dbReference>
<dbReference type="InterPro" id="IPR033728">
    <property type="entry name" value="ThrRS_core"/>
</dbReference>
<dbReference type="InterPro" id="IPR012947">
    <property type="entry name" value="tRNA_SAD"/>
</dbReference>
<dbReference type="NCBIfam" id="TIGR00418">
    <property type="entry name" value="thrS"/>
    <property type="match status" value="1"/>
</dbReference>
<dbReference type="PANTHER" id="PTHR11451:SF36">
    <property type="entry name" value="THREONINE--TRNA LIGASE 1, CYTOPLASMIC"/>
    <property type="match status" value="1"/>
</dbReference>
<dbReference type="PANTHER" id="PTHR11451">
    <property type="entry name" value="THREONINE-TRNA LIGASE"/>
    <property type="match status" value="1"/>
</dbReference>
<dbReference type="Pfam" id="PF03129">
    <property type="entry name" value="HGTP_anticodon"/>
    <property type="match status" value="1"/>
</dbReference>
<dbReference type="Pfam" id="PF02824">
    <property type="entry name" value="TGS"/>
    <property type="match status" value="1"/>
</dbReference>
<dbReference type="Pfam" id="PF00587">
    <property type="entry name" value="tRNA-synt_2b"/>
    <property type="match status" value="1"/>
</dbReference>
<dbReference type="Pfam" id="PF07973">
    <property type="entry name" value="tRNA_SAD"/>
    <property type="match status" value="1"/>
</dbReference>
<dbReference type="PRINTS" id="PR01047">
    <property type="entry name" value="TRNASYNTHTHR"/>
</dbReference>
<dbReference type="SMART" id="SM00863">
    <property type="entry name" value="tRNA_SAD"/>
    <property type="match status" value="1"/>
</dbReference>
<dbReference type="SUPFAM" id="SSF52954">
    <property type="entry name" value="Class II aaRS ABD-related"/>
    <property type="match status" value="1"/>
</dbReference>
<dbReference type="SUPFAM" id="SSF55681">
    <property type="entry name" value="Class II aaRS and biotin synthetases"/>
    <property type="match status" value="1"/>
</dbReference>
<dbReference type="SUPFAM" id="SSF81271">
    <property type="entry name" value="TGS-like"/>
    <property type="match status" value="1"/>
</dbReference>
<dbReference type="SUPFAM" id="SSF55186">
    <property type="entry name" value="ThrRS/AlaRS common domain"/>
    <property type="match status" value="1"/>
</dbReference>
<dbReference type="PROSITE" id="PS50862">
    <property type="entry name" value="AA_TRNA_LIGASE_II"/>
    <property type="match status" value="1"/>
</dbReference>
<dbReference type="PROSITE" id="PS51880">
    <property type="entry name" value="TGS"/>
    <property type="match status" value="1"/>
</dbReference>
<organism>
    <name type="scientific">Bos taurus</name>
    <name type="common">Bovine</name>
    <dbReference type="NCBI Taxonomy" id="9913"/>
    <lineage>
        <taxon>Eukaryota</taxon>
        <taxon>Metazoa</taxon>
        <taxon>Chordata</taxon>
        <taxon>Craniata</taxon>
        <taxon>Vertebrata</taxon>
        <taxon>Euteleostomi</taxon>
        <taxon>Mammalia</taxon>
        <taxon>Eutheria</taxon>
        <taxon>Laurasiatheria</taxon>
        <taxon>Artiodactyla</taxon>
        <taxon>Ruminantia</taxon>
        <taxon>Pecora</taxon>
        <taxon>Bovidae</taxon>
        <taxon>Bovinae</taxon>
        <taxon>Bos</taxon>
    </lineage>
</organism>
<gene>
    <name type="primary">TARS1</name>
    <name type="synonym">TARS</name>
</gene>
<name>SYTC_BOVIN</name>
<feature type="chain" id="PRO_0000245024" description="Threonine--tRNA ligase 1, cytoplasmic">
    <location>
        <begin position="1"/>
        <end position="723"/>
    </location>
</feature>
<feature type="domain" description="TGS" evidence="3">
    <location>
        <begin position="79"/>
        <end position="143"/>
    </location>
</feature>
<feature type="region of interest" description="Disordered" evidence="4">
    <location>
        <begin position="1"/>
        <end position="49"/>
    </location>
</feature>
<feature type="compositionally biased region" description="Polar residues" evidence="4">
    <location>
        <begin position="1"/>
        <end position="10"/>
    </location>
</feature>
<feature type="compositionally biased region" description="Basic and acidic residues" evidence="4">
    <location>
        <begin position="13"/>
        <end position="39"/>
    </location>
</feature>
<feature type="modified residue" description="Phosphoserine" evidence="1">
    <location>
        <position position="39"/>
    </location>
</feature>
<feature type="modified residue" description="N6-acetyllysine" evidence="1">
    <location>
        <position position="243"/>
    </location>
</feature>
<feature type="modified residue" description="Phosphothreonine" evidence="1">
    <location>
        <position position="246"/>
    </location>
</feature>
<feature type="modified residue" description="Phosphotyrosine" evidence="1">
    <location>
        <position position="298"/>
    </location>
</feature>
<feature type="modified residue" description="Phosphothreonine" evidence="1">
    <location>
        <position position="453"/>
    </location>
</feature>
<feature type="modified residue" description="Phosphoserine" evidence="1">
    <location>
        <position position="702"/>
    </location>
</feature>
<sequence length="723" mass="83492">MSEEQASSPSAKMGDEEKPVGAGEEKQKEGSKKKNKEGSGDGGRAELNPWPEYINTRLEMYNKLKAEHDSILAEKAEKDSKPIKVTLPDGKQVDAESWKTTPYQIACGISQGLADNTVIAKVNKAVWDLDRPLEEDCTLELLKFEDEEAQAVYWHSSAHIMGEAMERVYGGCLCYGPPIENGFYYDMYLEEGGVSSNDFSSLETLCKKIIKEKQAFERLEVKKETLLEMFKYNKFKCRILNEKVNTPTTTVYRCGPLIDLCRGPHVRHTGKIKTLKIHKNSSTYWEGKSDMETLQRIYGISFPDPKMLKEWEKFQEEAKNRDHRKIGRDQELYFFHELSPGSCFFLPKGAYIYNTLIEFIRSEYRKRGFQEVVTPNIYNSRLWVTSGHWEHYSENMFSFEVEKELFALKPMNCPGHCLMFDHRPRSWRELPLRVADFGVLHRNELSGALTGLTRVRRFQQDDAHIFCAMEQIEDEIKGCLDFLRTVYSIFGFSFKLNLSTRPEKFLGDIEVWNQAEKQLENSLNDFGEKWELNPGDGAFYGPKIDIQIKDAIGRYHQCATIQLDFQLPIRFNLTFVSHDGDDKKKPVIIHRAILGSVERMIAILTENYGGKWPFWLSPRQVMVVPVGPTCDEYAQKVRQQFHNAKFMVDIDLDPGCTLNKKIRNAQLAQYNFILVVGEKEKTSGTVNIRTRDNKVHGERTISETIERLQQLKHSRSKQAEEEF</sequence>
<protein>
    <recommendedName>
        <fullName>Threonine--tRNA ligase 1, cytoplasmic</fullName>
        <ecNumber evidence="2">6.1.1.3</ecNumber>
    </recommendedName>
    <alternativeName>
        <fullName>Threonine--tRNA ligase, cytoplasmic</fullName>
    </alternativeName>
    <alternativeName>
        <fullName>Threonyl-tRNA synthetase</fullName>
        <shortName>ThrRS</shortName>
    </alternativeName>
    <alternativeName>
        <fullName>Threonyl-tRNA synthetase 1</fullName>
    </alternativeName>
</protein>
<comment type="function">
    <text evidence="2">Catalyzes the attachment of threonine to tRNA(Thr) in a two-step reaction: threonine is first activated by ATP to form Thr-AMP and then transferred to the acceptor end of tRNA(Thr). Also edits incorrectly charged tRNA(Thr) via its editing domain, at the post-transfer stage.</text>
</comment>
<comment type="catalytic activity">
    <reaction evidence="2">
        <text>tRNA(Thr) + L-threonine + ATP = L-threonyl-tRNA(Thr) + AMP + diphosphate + H(+)</text>
        <dbReference type="Rhea" id="RHEA:24624"/>
        <dbReference type="Rhea" id="RHEA-COMP:9670"/>
        <dbReference type="Rhea" id="RHEA-COMP:9704"/>
        <dbReference type="ChEBI" id="CHEBI:15378"/>
        <dbReference type="ChEBI" id="CHEBI:30616"/>
        <dbReference type="ChEBI" id="CHEBI:33019"/>
        <dbReference type="ChEBI" id="CHEBI:57926"/>
        <dbReference type="ChEBI" id="CHEBI:78442"/>
        <dbReference type="ChEBI" id="CHEBI:78534"/>
        <dbReference type="ChEBI" id="CHEBI:456215"/>
        <dbReference type="EC" id="6.1.1.3"/>
    </reaction>
</comment>
<comment type="subunit">
    <text evidence="1">Homodimer.</text>
</comment>
<comment type="subcellular location">
    <subcellularLocation>
        <location evidence="2">Cytoplasm</location>
    </subcellularLocation>
</comment>
<comment type="PTM">
    <text evidence="1">ISGylated.</text>
</comment>
<comment type="similarity">
    <text evidence="5">Belongs to the class-II aminoacyl-tRNA synthetase family.</text>
</comment>
<proteinExistence type="evidence at transcript level"/>
<accession>Q3ZBV8</accession>
<reference key="1">
    <citation type="submission" date="2005-08" db="EMBL/GenBank/DDBJ databases">
        <authorList>
            <consortium name="NIH - Mammalian Gene Collection (MGC) project"/>
        </authorList>
    </citation>
    <scope>NUCLEOTIDE SEQUENCE [LARGE SCALE MRNA]</scope>
    <source>
        <strain>Crossbred X Angus</strain>
        <tissue>Ileum</tissue>
    </source>
</reference>